<proteinExistence type="inferred from homology"/>
<dbReference type="EMBL" id="CH445333">
    <property type="protein sequence ID" value="EAT86041.1"/>
    <property type="molecule type" value="Genomic_DNA"/>
</dbReference>
<dbReference type="RefSeq" id="XP_001796593.1">
    <property type="nucleotide sequence ID" value="XM_001796541.1"/>
</dbReference>
<dbReference type="SMR" id="Q0UPV4"/>
<dbReference type="FunCoup" id="Q0UPV4">
    <property type="interactions" value="382"/>
</dbReference>
<dbReference type="STRING" id="321614.Q0UPV4"/>
<dbReference type="EnsemblFungi" id="SNOT_06210">
    <property type="protein sequence ID" value="SNOT_06210"/>
    <property type="gene ID" value="SNOG_06210"/>
</dbReference>
<dbReference type="GeneID" id="5973472"/>
<dbReference type="KEGG" id="pno:SNOG_06210"/>
<dbReference type="VEuPathDB" id="FungiDB:JI435_062100"/>
<dbReference type="eggNOG" id="KOG1106">
    <property type="taxonomic scope" value="Eukaryota"/>
</dbReference>
<dbReference type="HOGENOM" id="CLU_081646_0_1_1"/>
<dbReference type="InParanoid" id="Q0UPV4"/>
<dbReference type="OMA" id="IYKEGWR"/>
<dbReference type="OrthoDB" id="10251744at2759"/>
<dbReference type="Proteomes" id="UP000001055">
    <property type="component" value="Unassembled WGS sequence"/>
</dbReference>
<dbReference type="GO" id="GO:0000785">
    <property type="term" value="C:chromatin"/>
    <property type="evidence" value="ECO:0007669"/>
    <property type="project" value="EnsemblFungi"/>
</dbReference>
<dbReference type="GO" id="GO:0071162">
    <property type="term" value="C:CMG complex"/>
    <property type="evidence" value="ECO:0007669"/>
    <property type="project" value="EnsemblFungi"/>
</dbReference>
<dbReference type="GO" id="GO:0000811">
    <property type="term" value="C:GINS complex"/>
    <property type="evidence" value="ECO:0000318"/>
    <property type="project" value="GO_Central"/>
</dbReference>
<dbReference type="GO" id="GO:0043596">
    <property type="term" value="C:nuclear replication fork"/>
    <property type="evidence" value="ECO:0007669"/>
    <property type="project" value="EnsemblFungi"/>
</dbReference>
<dbReference type="GO" id="GO:0000727">
    <property type="term" value="P:double-strand break repair via break-induced replication"/>
    <property type="evidence" value="ECO:0007669"/>
    <property type="project" value="EnsemblFungi"/>
</dbReference>
<dbReference type="GO" id="GO:1902975">
    <property type="term" value="P:mitotic DNA replication initiation"/>
    <property type="evidence" value="ECO:0000318"/>
    <property type="project" value="GO_Central"/>
</dbReference>
<dbReference type="CDD" id="cd11713">
    <property type="entry name" value="GINS_A_psf3"/>
    <property type="match status" value="1"/>
</dbReference>
<dbReference type="CDD" id="cd21693">
    <property type="entry name" value="GINS_B_Psf3"/>
    <property type="match status" value="1"/>
</dbReference>
<dbReference type="Gene3D" id="1.20.58.2050">
    <property type="match status" value="1"/>
</dbReference>
<dbReference type="InterPro" id="IPR021151">
    <property type="entry name" value="GINS_A"/>
</dbReference>
<dbReference type="InterPro" id="IPR036224">
    <property type="entry name" value="GINS_bundle-like_dom_sf"/>
</dbReference>
<dbReference type="InterPro" id="IPR010492">
    <property type="entry name" value="GINS_Psf3"/>
</dbReference>
<dbReference type="InterPro" id="IPR038437">
    <property type="entry name" value="GINS_Psf3_sf"/>
</dbReference>
<dbReference type="InterPro" id="IPR055221">
    <property type="entry name" value="PSF3_N"/>
</dbReference>
<dbReference type="PANTHER" id="PTHR22768">
    <property type="entry name" value="DNA REPLICATION COMPLEX GINS PROTEIN PSF3"/>
    <property type="match status" value="1"/>
</dbReference>
<dbReference type="PANTHER" id="PTHR22768:SF0">
    <property type="entry name" value="DNA REPLICATION COMPLEX GINS PROTEIN PSF3"/>
    <property type="match status" value="1"/>
</dbReference>
<dbReference type="Pfam" id="PF22466">
    <property type="entry name" value="PSF3_N"/>
    <property type="match status" value="1"/>
</dbReference>
<dbReference type="Pfam" id="PF05916">
    <property type="entry name" value="Sld5"/>
    <property type="match status" value="1"/>
</dbReference>
<dbReference type="SUPFAM" id="SSF158573">
    <property type="entry name" value="GINS helical bundle-like"/>
    <property type="match status" value="1"/>
</dbReference>
<dbReference type="SUPFAM" id="SSF160059">
    <property type="entry name" value="PriA/YqbF domain"/>
    <property type="match status" value="1"/>
</dbReference>
<feature type="chain" id="PRO_0000278426" description="DNA replication complex GINS protein PSF3">
    <location>
        <begin position="1"/>
        <end position="179"/>
    </location>
</feature>
<gene>
    <name type="primary">PSF3</name>
    <name type="ORF">SNOG_06210</name>
</gene>
<name>PSF3_PHANO</name>
<protein>
    <recommendedName>
        <fullName>DNA replication complex GINS protein PSF3</fullName>
    </recommendedName>
</protein>
<evidence type="ECO:0000250" key="1"/>
<evidence type="ECO:0000305" key="2"/>
<comment type="function">
    <text evidence="1">The GINS complex plays an essential role in the initiation of DNA replication.</text>
</comment>
<comment type="subunit">
    <text evidence="1">Component of the GINS complex which is a heterotetramer of SLD5, PSF1, PSF2 and PSF3.</text>
</comment>
<comment type="subcellular location">
    <subcellularLocation>
        <location evidence="1">Nucleus</location>
    </subcellularLocation>
</comment>
<comment type="similarity">
    <text evidence="2">Belongs to the GINS3/PSF3 family.</text>
</comment>
<sequence length="179" mass="19682">MSSYYSVDAILTDAQKVPCTFELTVPGLGFLEGNMSGDMKQGSKVELPLWLGEMLALSQSLNTSSLVTLDPPSALSPRVLNALKADPRTVDLRALAPHFYDLGARILELFEEEKMIEVLSDTFKARAAVIADQAHNPRGALGEGADFMRGLDENERQLFRAAHDSAKAARTWMTDLKRK</sequence>
<reference key="1">
    <citation type="journal article" date="2007" name="Plant Cell">
        <title>Dothideomycete-plant interactions illuminated by genome sequencing and EST analysis of the wheat pathogen Stagonospora nodorum.</title>
        <authorList>
            <person name="Hane J.K."/>
            <person name="Lowe R.G.T."/>
            <person name="Solomon P.S."/>
            <person name="Tan K.-C."/>
            <person name="Schoch C.L."/>
            <person name="Spatafora J.W."/>
            <person name="Crous P.W."/>
            <person name="Kodira C.D."/>
            <person name="Birren B.W."/>
            <person name="Galagan J.E."/>
            <person name="Torriani S.F.F."/>
            <person name="McDonald B.A."/>
            <person name="Oliver R.P."/>
        </authorList>
    </citation>
    <scope>NUCLEOTIDE SEQUENCE [LARGE SCALE GENOMIC DNA]</scope>
    <source>
        <strain>SN15 / ATCC MYA-4574 / FGSC 10173</strain>
    </source>
</reference>
<organism>
    <name type="scientific">Phaeosphaeria nodorum (strain SN15 / ATCC MYA-4574 / FGSC 10173)</name>
    <name type="common">Glume blotch fungus</name>
    <name type="synonym">Parastagonospora nodorum</name>
    <dbReference type="NCBI Taxonomy" id="321614"/>
    <lineage>
        <taxon>Eukaryota</taxon>
        <taxon>Fungi</taxon>
        <taxon>Dikarya</taxon>
        <taxon>Ascomycota</taxon>
        <taxon>Pezizomycotina</taxon>
        <taxon>Dothideomycetes</taxon>
        <taxon>Pleosporomycetidae</taxon>
        <taxon>Pleosporales</taxon>
        <taxon>Pleosporineae</taxon>
        <taxon>Phaeosphaeriaceae</taxon>
        <taxon>Parastagonospora</taxon>
    </lineage>
</organism>
<keyword id="KW-0235">DNA replication</keyword>
<keyword id="KW-0539">Nucleus</keyword>
<accession>Q0UPV4</accession>